<feature type="chain" id="PRO_1000194543" description="tRNA pseudouridine synthase A">
    <location>
        <begin position="1"/>
        <end position="261"/>
    </location>
</feature>
<feature type="active site" description="Nucleophile" evidence="1">
    <location>
        <position position="52"/>
    </location>
</feature>
<feature type="binding site" evidence="1">
    <location>
        <position position="110"/>
    </location>
    <ligand>
        <name>substrate</name>
    </ligand>
</feature>
<gene>
    <name evidence="1" type="primary">truA</name>
    <name type="ordered locus">CBUD_0956</name>
</gene>
<protein>
    <recommendedName>
        <fullName evidence="1">tRNA pseudouridine synthase A</fullName>
        <ecNumber evidence="1">5.4.99.12</ecNumber>
    </recommendedName>
    <alternativeName>
        <fullName evidence="1">tRNA pseudouridine(38-40) synthase</fullName>
    </alternativeName>
    <alternativeName>
        <fullName evidence="1">tRNA pseudouridylate synthase I</fullName>
    </alternativeName>
    <alternativeName>
        <fullName evidence="1">tRNA-uridine isomerase I</fullName>
    </alternativeName>
</protein>
<accession>A9KFZ5</accession>
<organism>
    <name type="scientific">Coxiella burnetii (strain Dugway 5J108-111)</name>
    <dbReference type="NCBI Taxonomy" id="434922"/>
    <lineage>
        <taxon>Bacteria</taxon>
        <taxon>Pseudomonadati</taxon>
        <taxon>Pseudomonadota</taxon>
        <taxon>Gammaproteobacteria</taxon>
        <taxon>Legionellales</taxon>
        <taxon>Coxiellaceae</taxon>
        <taxon>Coxiella</taxon>
    </lineage>
</organism>
<proteinExistence type="inferred from homology"/>
<comment type="function">
    <text evidence="1">Formation of pseudouridine at positions 38, 39 and 40 in the anticodon stem and loop of transfer RNAs.</text>
</comment>
<comment type="catalytic activity">
    <reaction evidence="1">
        <text>uridine(38/39/40) in tRNA = pseudouridine(38/39/40) in tRNA</text>
        <dbReference type="Rhea" id="RHEA:22376"/>
        <dbReference type="Rhea" id="RHEA-COMP:10085"/>
        <dbReference type="Rhea" id="RHEA-COMP:10087"/>
        <dbReference type="ChEBI" id="CHEBI:65314"/>
        <dbReference type="ChEBI" id="CHEBI:65315"/>
        <dbReference type="EC" id="5.4.99.12"/>
    </reaction>
</comment>
<comment type="subunit">
    <text evidence="1">Homodimer.</text>
</comment>
<comment type="similarity">
    <text evidence="1">Belongs to the tRNA pseudouridine synthase TruA family.</text>
</comment>
<name>TRUA_COXBN</name>
<keyword id="KW-0413">Isomerase</keyword>
<keyword id="KW-0819">tRNA processing</keyword>
<reference key="1">
    <citation type="journal article" date="2009" name="Infect. Immun.">
        <title>Comparative genomics reveal extensive transposon-mediated genomic plasticity and diversity among potential effector proteins within the genus Coxiella.</title>
        <authorList>
            <person name="Beare P.A."/>
            <person name="Unsworth N."/>
            <person name="Andoh M."/>
            <person name="Voth D.E."/>
            <person name="Omsland A."/>
            <person name="Gilk S.D."/>
            <person name="Williams K.P."/>
            <person name="Sobral B.W."/>
            <person name="Kupko J.J. III"/>
            <person name="Porcella S.F."/>
            <person name="Samuel J.E."/>
            <person name="Heinzen R.A."/>
        </authorList>
    </citation>
    <scope>NUCLEOTIDE SEQUENCE [LARGE SCALE GENOMIC DNA]</scope>
    <source>
        <strain>Dugway 5J108-111</strain>
    </source>
</reference>
<dbReference type="EC" id="5.4.99.12" evidence="1"/>
<dbReference type="EMBL" id="CP000733">
    <property type="protein sequence ID" value="ABS76585.1"/>
    <property type="molecule type" value="Genomic_DNA"/>
</dbReference>
<dbReference type="RefSeq" id="WP_005768766.1">
    <property type="nucleotide sequence ID" value="NC_009727.1"/>
</dbReference>
<dbReference type="SMR" id="A9KFZ5"/>
<dbReference type="KEGG" id="cbd:CBUD_0956"/>
<dbReference type="HOGENOM" id="CLU_014673_0_2_6"/>
<dbReference type="Proteomes" id="UP000008555">
    <property type="component" value="Chromosome"/>
</dbReference>
<dbReference type="GO" id="GO:0003723">
    <property type="term" value="F:RNA binding"/>
    <property type="evidence" value="ECO:0007669"/>
    <property type="project" value="InterPro"/>
</dbReference>
<dbReference type="GO" id="GO:0160147">
    <property type="term" value="F:tRNA pseudouridine(38-40) synthase activity"/>
    <property type="evidence" value="ECO:0007669"/>
    <property type="project" value="UniProtKB-EC"/>
</dbReference>
<dbReference type="GO" id="GO:0031119">
    <property type="term" value="P:tRNA pseudouridine synthesis"/>
    <property type="evidence" value="ECO:0007669"/>
    <property type="project" value="UniProtKB-UniRule"/>
</dbReference>
<dbReference type="CDD" id="cd02570">
    <property type="entry name" value="PseudoU_synth_EcTruA"/>
    <property type="match status" value="1"/>
</dbReference>
<dbReference type="FunFam" id="3.30.70.580:FF:000001">
    <property type="entry name" value="tRNA pseudouridine synthase A"/>
    <property type="match status" value="1"/>
</dbReference>
<dbReference type="Gene3D" id="3.30.70.660">
    <property type="entry name" value="Pseudouridine synthase I, catalytic domain, C-terminal subdomain"/>
    <property type="match status" value="1"/>
</dbReference>
<dbReference type="Gene3D" id="3.30.70.580">
    <property type="entry name" value="Pseudouridine synthase I, catalytic domain, N-terminal subdomain"/>
    <property type="match status" value="1"/>
</dbReference>
<dbReference type="HAMAP" id="MF_00171">
    <property type="entry name" value="TruA"/>
    <property type="match status" value="1"/>
</dbReference>
<dbReference type="InterPro" id="IPR020103">
    <property type="entry name" value="PsdUridine_synth_cat_dom_sf"/>
</dbReference>
<dbReference type="InterPro" id="IPR001406">
    <property type="entry name" value="PsdUridine_synth_TruA"/>
</dbReference>
<dbReference type="InterPro" id="IPR020097">
    <property type="entry name" value="PsdUridine_synth_TruA_a/b_dom"/>
</dbReference>
<dbReference type="InterPro" id="IPR020095">
    <property type="entry name" value="PsdUridine_synth_TruA_C"/>
</dbReference>
<dbReference type="InterPro" id="IPR020094">
    <property type="entry name" value="TruA/RsuA/RluB/E/F_N"/>
</dbReference>
<dbReference type="NCBIfam" id="TIGR00071">
    <property type="entry name" value="hisT_truA"/>
    <property type="match status" value="1"/>
</dbReference>
<dbReference type="PANTHER" id="PTHR11142">
    <property type="entry name" value="PSEUDOURIDYLATE SYNTHASE"/>
    <property type="match status" value="1"/>
</dbReference>
<dbReference type="PANTHER" id="PTHR11142:SF0">
    <property type="entry name" value="TRNA PSEUDOURIDINE SYNTHASE-LIKE 1"/>
    <property type="match status" value="1"/>
</dbReference>
<dbReference type="Pfam" id="PF01416">
    <property type="entry name" value="PseudoU_synth_1"/>
    <property type="match status" value="2"/>
</dbReference>
<dbReference type="PIRSF" id="PIRSF001430">
    <property type="entry name" value="tRNA_psdUrid_synth"/>
    <property type="match status" value="1"/>
</dbReference>
<dbReference type="SUPFAM" id="SSF55120">
    <property type="entry name" value="Pseudouridine synthase"/>
    <property type="match status" value="1"/>
</dbReference>
<evidence type="ECO:0000255" key="1">
    <source>
        <dbReference type="HAMAP-Rule" id="MF_00171"/>
    </source>
</evidence>
<sequence length="261" mass="29434">MARIALGIRYDGSAYHGWQVQEALKTVQGEVEKALSAVANHPVFVTCAGRTDAGVHASAQVAHFDTTAYRSDHAWVFGANSNLPHDISILWAKAVEEDFHARYSAMARRYRYIVYNHEIRPAILRKAIGWHYRPLDEKRMQAGAQYLIGEHDFSSFQGAGCQSRTPVRKIFQIEIYRIRRMVVIEVQANAFLLHMVRNIAGVLIAIGSGEKHPDWAQTVLKAKDRRQGGVTVPPNGLYLVEVNYPPNFKLPRMPLGPFFLP</sequence>